<name>RF1_CAMJE</name>
<accession>Q9PM63</accession>
<accession>Q0P816</accession>
<sequence length="355" mass="39943">MLASKLDPFFKRFEELNSLLSSSDILNDISKMTTLSKEQKNLEPIVLKAKEYLKTLDNIEENKALLNDPELGELAKEELKTLEELKPKLEEEIKILLLPKDPNDERNIFLEIRAGTGGDEASLFVGDLVKAYARYAENRGYKLEIVSSSEGSVGGFKEIIMLVKGTGAYSRLKYEGGTHRVQRVPQTESQGRVHTSAITVAVMPEVDDIEIEINPNDLKVDVMRSSGHGGQSVNTTDSAVRITHIPTGIVVVNQDGKSQHKNKESAMKVLKARLYEMQESERLAKESEARKSQVGSGDRSERIRTYNFPQNRISDHRINLTLYRLDAIMQDGLFDEIIEPLITHHQAQALQEQNL</sequence>
<organism>
    <name type="scientific">Campylobacter jejuni subsp. jejuni serotype O:2 (strain ATCC 700819 / NCTC 11168)</name>
    <dbReference type="NCBI Taxonomy" id="192222"/>
    <lineage>
        <taxon>Bacteria</taxon>
        <taxon>Pseudomonadati</taxon>
        <taxon>Campylobacterota</taxon>
        <taxon>Epsilonproteobacteria</taxon>
        <taxon>Campylobacterales</taxon>
        <taxon>Campylobacteraceae</taxon>
        <taxon>Campylobacter</taxon>
    </lineage>
</organism>
<evidence type="ECO:0000255" key="1">
    <source>
        <dbReference type="HAMAP-Rule" id="MF_00093"/>
    </source>
</evidence>
<evidence type="ECO:0000256" key="2">
    <source>
        <dbReference type="SAM" id="MobiDB-lite"/>
    </source>
</evidence>
<comment type="function">
    <text evidence="1">Peptide chain release factor 1 directs the termination of translation in response to the peptide chain termination codons UAG and UAA.</text>
</comment>
<comment type="subcellular location">
    <subcellularLocation>
        <location evidence="1">Cytoplasm</location>
    </subcellularLocation>
</comment>
<comment type="PTM">
    <text evidence="1">Methylated by PrmC. Methylation increases the termination efficiency of RF1.</text>
</comment>
<comment type="similarity">
    <text evidence="1">Belongs to the prokaryotic/mitochondrial release factor family.</text>
</comment>
<gene>
    <name evidence="1" type="primary">prfA</name>
    <name type="ordered locus">Cj1612</name>
</gene>
<feature type="chain" id="PRO_0000177651" description="Peptide chain release factor 1">
    <location>
        <begin position="1"/>
        <end position="355"/>
    </location>
</feature>
<feature type="region of interest" description="Disordered" evidence="2">
    <location>
        <begin position="280"/>
        <end position="303"/>
    </location>
</feature>
<feature type="compositionally biased region" description="Basic and acidic residues" evidence="2">
    <location>
        <begin position="280"/>
        <end position="291"/>
    </location>
</feature>
<feature type="modified residue" description="N5-methylglutamine" evidence="1">
    <location>
        <position position="231"/>
    </location>
</feature>
<protein>
    <recommendedName>
        <fullName evidence="1">Peptide chain release factor 1</fullName>
        <shortName evidence="1">RF-1</shortName>
    </recommendedName>
</protein>
<reference key="1">
    <citation type="journal article" date="2000" name="Nature">
        <title>The genome sequence of the food-borne pathogen Campylobacter jejuni reveals hypervariable sequences.</title>
        <authorList>
            <person name="Parkhill J."/>
            <person name="Wren B.W."/>
            <person name="Mungall K.L."/>
            <person name="Ketley J.M."/>
            <person name="Churcher C.M."/>
            <person name="Basham D."/>
            <person name="Chillingworth T."/>
            <person name="Davies R.M."/>
            <person name="Feltwell T."/>
            <person name="Holroyd S."/>
            <person name="Jagels K."/>
            <person name="Karlyshev A.V."/>
            <person name="Moule S."/>
            <person name="Pallen M.J."/>
            <person name="Penn C.W."/>
            <person name="Quail M.A."/>
            <person name="Rajandream M.A."/>
            <person name="Rutherford K.M."/>
            <person name="van Vliet A.H.M."/>
            <person name="Whitehead S."/>
            <person name="Barrell B.G."/>
        </authorList>
    </citation>
    <scope>NUCLEOTIDE SEQUENCE [LARGE SCALE GENOMIC DNA]</scope>
    <source>
        <strain>ATCC 700819 / NCTC 11168</strain>
    </source>
</reference>
<proteinExistence type="inferred from homology"/>
<dbReference type="EMBL" id="AL111168">
    <property type="protein sequence ID" value="CAL35709.1"/>
    <property type="molecule type" value="Genomic_DNA"/>
</dbReference>
<dbReference type="PIR" id="B81257">
    <property type="entry name" value="B81257"/>
</dbReference>
<dbReference type="RefSeq" id="WP_002851189.1">
    <property type="nucleotide sequence ID" value="NZ_SZUC01000002.1"/>
</dbReference>
<dbReference type="RefSeq" id="YP_002344981.1">
    <property type="nucleotide sequence ID" value="NC_002163.1"/>
</dbReference>
<dbReference type="SMR" id="Q9PM63"/>
<dbReference type="IntAct" id="Q9PM63">
    <property type="interactions" value="6"/>
</dbReference>
<dbReference type="STRING" id="192222.Cj1612"/>
<dbReference type="PaxDb" id="192222-Cj1612"/>
<dbReference type="EnsemblBacteria" id="CAL35709">
    <property type="protein sequence ID" value="CAL35709"/>
    <property type="gene ID" value="Cj1612"/>
</dbReference>
<dbReference type="GeneID" id="905879"/>
<dbReference type="KEGG" id="cje:Cj1612"/>
<dbReference type="PATRIC" id="fig|192222.6.peg.1588"/>
<dbReference type="eggNOG" id="COG0216">
    <property type="taxonomic scope" value="Bacteria"/>
</dbReference>
<dbReference type="HOGENOM" id="CLU_036856_0_1_7"/>
<dbReference type="OrthoDB" id="9806673at2"/>
<dbReference type="Proteomes" id="UP000000799">
    <property type="component" value="Chromosome"/>
</dbReference>
<dbReference type="GO" id="GO:0005737">
    <property type="term" value="C:cytoplasm"/>
    <property type="evidence" value="ECO:0007669"/>
    <property type="project" value="UniProtKB-SubCell"/>
</dbReference>
<dbReference type="GO" id="GO:0016149">
    <property type="term" value="F:translation release factor activity, codon specific"/>
    <property type="evidence" value="ECO:0007669"/>
    <property type="project" value="UniProtKB-UniRule"/>
</dbReference>
<dbReference type="FunFam" id="3.30.160.20:FF:000004">
    <property type="entry name" value="Peptide chain release factor 1"/>
    <property type="match status" value="1"/>
</dbReference>
<dbReference type="FunFam" id="3.30.70.1660:FF:000002">
    <property type="entry name" value="Peptide chain release factor 1"/>
    <property type="match status" value="1"/>
</dbReference>
<dbReference type="FunFam" id="3.30.70.1660:FF:000004">
    <property type="entry name" value="Peptide chain release factor 1"/>
    <property type="match status" value="1"/>
</dbReference>
<dbReference type="Gene3D" id="3.30.160.20">
    <property type="match status" value="1"/>
</dbReference>
<dbReference type="Gene3D" id="3.30.70.1660">
    <property type="match status" value="1"/>
</dbReference>
<dbReference type="Gene3D" id="6.10.140.1950">
    <property type="match status" value="1"/>
</dbReference>
<dbReference type="HAMAP" id="MF_00093">
    <property type="entry name" value="Rel_fac_1"/>
    <property type="match status" value="1"/>
</dbReference>
<dbReference type="InterPro" id="IPR005139">
    <property type="entry name" value="PCRF"/>
</dbReference>
<dbReference type="InterPro" id="IPR000352">
    <property type="entry name" value="Pep_chain_release_fac_I"/>
</dbReference>
<dbReference type="InterPro" id="IPR045853">
    <property type="entry name" value="Pep_chain_release_fac_I_sf"/>
</dbReference>
<dbReference type="InterPro" id="IPR050057">
    <property type="entry name" value="Prokaryotic/Mito_RF"/>
</dbReference>
<dbReference type="InterPro" id="IPR004373">
    <property type="entry name" value="RF-1"/>
</dbReference>
<dbReference type="NCBIfam" id="TIGR00019">
    <property type="entry name" value="prfA"/>
    <property type="match status" value="1"/>
</dbReference>
<dbReference type="NCBIfam" id="NF001859">
    <property type="entry name" value="PRK00591.1"/>
    <property type="match status" value="1"/>
</dbReference>
<dbReference type="PANTHER" id="PTHR43804">
    <property type="entry name" value="LD18447P"/>
    <property type="match status" value="1"/>
</dbReference>
<dbReference type="PANTHER" id="PTHR43804:SF7">
    <property type="entry name" value="LD18447P"/>
    <property type="match status" value="1"/>
</dbReference>
<dbReference type="Pfam" id="PF03462">
    <property type="entry name" value="PCRF"/>
    <property type="match status" value="1"/>
</dbReference>
<dbReference type="Pfam" id="PF00472">
    <property type="entry name" value="RF-1"/>
    <property type="match status" value="1"/>
</dbReference>
<dbReference type="SMART" id="SM00937">
    <property type="entry name" value="PCRF"/>
    <property type="match status" value="1"/>
</dbReference>
<dbReference type="SUPFAM" id="SSF75620">
    <property type="entry name" value="Release factor"/>
    <property type="match status" value="1"/>
</dbReference>
<dbReference type="PROSITE" id="PS00745">
    <property type="entry name" value="RF_PROK_I"/>
    <property type="match status" value="1"/>
</dbReference>
<keyword id="KW-0963">Cytoplasm</keyword>
<keyword id="KW-0488">Methylation</keyword>
<keyword id="KW-0648">Protein biosynthesis</keyword>
<keyword id="KW-1185">Reference proteome</keyword>